<gene>
    <name type="primary">asnC</name>
    <name type="ordered locus">SF3823</name>
    <name type="ordered locus">S3945</name>
</gene>
<proteinExistence type="inferred from homology"/>
<accession>P0ACI9</accession>
<accession>P03809</accession>
<name>ASNC_SHIFL</name>
<protein>
    <recommendedName>
        <fullName>Regulatory protein AsnC</fullName>
    </recommendedName>
</protein>
<evidence type="ECO:0000250" key="1"/>
<evidence type="ECO:0000255" key="2">
    <source>
        <dbReference type="PROSITE-ProRule" id="PRU00319"/>
    </source>
</evidence>
<organism>
    <name type="scientific">Shigella flexneri</name>
    <dbReference type="NCBI Taxonomy" id="623"/>
    <lineage>
        <taxon>Bacteria</taxon>
        <taxon>Pseudomonadati</taxon>
        <taxon>Pseudomonadota</taxon>
        <taxon>Gammaproteobacteria</taxon>
        <taxon>Enterobacterales</taxon>
        <taxon>Enterobacteriaceae</taxon>
        <taxon>Shigella</taxon>
    </lineage>
</organism>
<reference key="1">
    <citation type="journal article" date="2002" name="Nucleic Acids Res.">
        <title>Genome sequence of Shigella flexneri 2a: insights into pathogenicity through comparison with genomes of Escherichia coli K12 and O157.</title>
        <authorList>
            <person name="Jin Q."/>
            <person name="Yuan Z."/>
            <person name="Xu J."/>
            <person name="Wang Y."/>
            <person name="Shen Y."/>
            <person name="Lu W."/>
            <person name="Wang J."/>
            <person name="Liu H."/>
            <person name="Yang J."/>
            <person name="Yang F."/>
            <person name="Zhang X."/>
            <person name="Zhang J."/>
            <person name="Yang G."/>
            <person name="Wu H."/>
            <person name="Qu D."/>
            <person name="Dong J."/>
            <person name="Sun L."/>
            <person name="Xue Y."/>
            <person name="Zhao A."/>
            <person name="Gao Y."/>
            <person name="Zhu J."/>
            <person name="Kan B."/>
            <person name="Ding K."/>
            <person name="Chen S."/>
            <person name="Cheng H."/>
            <person name="Yao Z."/>
            <person name="He B."/>
            <person name="Chen R."/>
            <person name="Ma D."/>
            <person name="Qiang B."/>
            <person name="Wen Y."/>
            <person name="Hou Y."/>
            <person name="Yu J."/>
        </authorList>
    </citation>
    <scope>NUCLEOTIDE SEQUENCE [LARGE SCALE GENOMIC DNA]</scope>
    <source>
        <strain>301 / Serotype 2a</strain>
    </source>
</reference>
<reference key="2">
    <citation type="journal article" date="2003" name="Infect. Immun.">
        <title>Complete genome sequence and comparative genomics of Shigella flexneri serotype 2a strain 2457T.</title>
        <authorList>
            <person name="Wei J."/>
            <person name="Goldberg M.B."/>
            <person name="Burland V."/>
            <person name="Venkatesan M.M."/>
            <person name="Deng W."/>
            <person name="Fournier G."/>
            <person name="Mayhew G.F."/>
            <person name="Plunkett G. III"/>
            <person name="Rose D.J."/>
            <person name="Darling A."/>
            <person name="Mau B."/>
            <person name="Perna N.T."/>
            <person name="Payne S.M."/>
            <person name="Runyen-Janecky L.J."/>
            <person name="Zhou S."/>
            <person name="Schwartz D.C."/>
            <person name="Blattner F.R."/>
        </authorList>
    </citation>
    <scope>NUCLEOTIDE SEQUENCE [LARGE SCALE GENOMIC DNA]</scope>
    <source>
        <strain>ATCC 700930 / 2457T / Serotype 2a</strain>
    </source>
</reference>
<comment type="function">
    <text evidence="1">Activator of asnA transcription; autogenous regulator of its own transcription; and repressor of the expression of gidA at a post-transcriptional level.</text>
</comment>
<keyword id="KW-0010">Activator</keyword>
<keyword id="KW-0238">DNA-binding</keyword>
<keyword id="KW-1185">Reference proteome</keyword>
<keyword id="KW-0804">Transcription</keyword>
<keyword id="KW-0805">Transcription regulation</keyword>
<dbReference type="EMBL" id="AE005674">
    <property type="protein sequence ID" value="AAN45263.1"/>
    <property type="molecule type" value="Genomic_DNA"/>
</dbReference>
<dbReference type="EMBL" id="AE014073">
    <property type="protein sequence ID" value="AAP18934.1"/>
    <property type="molecule type" value="Genomic_DNA"/>
</dbReference>
<dbReference type="RefSeq" id="NP_709556.1">
    <property type="nucleotide sequence ID" value="NC_004337.2"/>
</dbReference>
<dbReference type="RefSeq" id="WP_000432970.1">
    <property type="nucleotide sequence ID" value="NZ_WPGW01000050.1"/>
</dbReference>
<dbReference type="SMR" id="P0ACI9"/>
<dbReference type="STRING" id="198214.SF3823"/>
<dbReference type="PaxDb" id="198214-SF3823"/>
<dbReference type="GeneID" id="1026038"/>
<dbReference type="GeneID" id="86861851"/>
<dbReference type="KEGG" id="sfl:SF3823"/>
<dbReference type="KEGG" id="sfx:S3945"/>
<dbReference type="PATRIC" id="fig|198214.7.peg.4511"/>
<dbReference type="HOGENOM" id="CLU_091233_5_0_6"/>
<dbReference type="Proteomes" id="UP000001006">
    <property type="component" value="Chromosome"/>
</dbReference>
<dbReference type="Proteomes" id="UP000002673">
    <property type="component" value="Chromosome"/>
</dbReference>
<dbReference type="GO" id="GO:0005829">
    <property type="term" value="C:cytosol"/>
    <property type="evidence" value="ECO:0007669"/>
    <property type="project" value="TreeGrafter"/>
</dbReference>
<dbReference type="GO" id="GO:0043565">
    <property type="term" value="F:sequence-specific DNA binding"/>
    <property type="evidence" value="ECO:0007669"/>
    <property type="project" value="InterPro"/>
</dbReference>
<dbReference type="GO" id="GO:0006355">
    <property type="term" value="P:regulation of DNA-templated transcription"/>
    <property type="evidence" value="ECO:0007669"/>
    <property type="project" value="UniProtKB-ARBA"/>
</dbReference>
<dbReference type="GO" id="GO:0043200">
    <property type="term" value="P:response to amino acid"/>
    <property type="evidence" value="ECO:0007669"/>
    <property type="project" value="TreeGrafter"/>
</dbReference>
<dbReference type="CDD" id="cd00090">
    <property type="entry name" value="HTH_ARSR"/>
    <property type="match status" value="1"/>
</dbReference>
<dbReference type="FunFam" id="1.10.10.10:FF:000078">
    <property type="entry name" value="Transcriptional regulator AsnC"/>
    <property type="match status" value="1"/>
</dbReference>
<dbReference type="FunFam" id="3.30.70.920:FF:000002">
    <property type="entry name" value="Transcriptional regulator AsnC"/>
    <property type="match status" value="1"/>
</dbReference>
<dbReference type="Gene3D" id="3.30.70.920">
    <property type="match status" value="1"/>
</dbReference>
<dbReference type="Gene3D" id="1.10.10.10">
    <property type="entry name" value="Winged helix-like DNA-binding domain superfamily/Winged helix DNA-binding domain"/>
    <property type="match status" value="1"/>
</dbReference>
<dbReference type="InterPro" id="IPR011991">
    <property type="entry name" value="ArsR-like_HTH"/>
</dbReference>
<dbReference type="InterPro" id="IPR000485">
    <property type="entry name" value="AsnC-type_HTH_dom"/>
</dbReference>
<dbReference type="InterPro" id="IPR011008">
    <property type="entry name" value="Dimeric_a/b-barrel"/>
</dbReference>
<dbReference type="InterPro" id="IPR019888">
    <property type="entry name" value="Tscrpt_reg_AsnC-like"/>
</dbReference>
<dbReference type="InterPro" id="IPR019887">
    <property type="entry name" value="Tscrpt_reg_AsnC/Lrp_C"/>
</dbReference>
<dbReference type="InterPro" id="IPR019885">
    <property type="entry name" value="Tscrpt_reg_HTH_AsnC-type_CS"/>
</dbReference>
<dbReference type="InterPro" id="IPR036388">
    <property type="entry name" value="WH-like_DNA-bd_sf"/>
</dbReference>
<dbReference type="InterPro" id="IPR036390">
    <property type="entry name" value="WH_DNA-bd_sf"/>
</dbReference>
<dbReference type="NCBIfam" id="NF008384">
    <property type="entry name" value="PRK11179.1"/>
    <property type="match status" value="1"/>
</dbReference>
<dbReference type="PANTHER" id="PTHR30154">
    <property type="entry name" value="LEUCINE-RESPONSIVE REGULATORY PROTEIN"/>
    <property type="match status" value="1"/>
</dbReference>
<dbReference type="PANTHER" id="PTHR30154:SF34">
    <property type="entry name" value="TRANSCRIPTIONAL REGULATOR AZLB"/>
    <property type="match status" value="1"/>
</dbReference>
<dbReference type="Pfam" id="PF01037">
    <property type="entry name" value="AsnC_trans_reg"/>
    <property type="match status" value="1"/>
</dbReference>
<dbReference type="Pfam" id="PF13412">
    <property type="entry name" value="HTH_24"/>
    <property type="match status" value="1"/>
</dbReference>
<dbReference type="PRINTS" id="PR00033">
    <property type="entry name" value="HTHASNC"/>
</dbReference>
<dbReference type="SMART" id="SM00344">
    <property type="entry name" value="HTH_ASNC"/>
    <property type="match status" value="1"/>
</dbReference>
<dbReference type="SUPFAM" id="SSF54909">
    <property type="entry name" value="Dimeric alpha+beta barrel"/>
    <property type="match status" value="1"/>
</dbReference>
<dbReference type="SUPFAM" id="SSF46785">
    <property type="entry name" value="Winged helix' DNA-binding domain"/>
    <property type="match status" value="1"/>
</dbReference>
<dbReference type="PROSITE" id="PS00519">
    <property type="entry name" value="HTH_ASNC_1"/>
    <property type="match status" value="1"/>
</dbReference>
<dbReference type="PROSITE" id="PS50956">
    <property type="entry name" value="HTH_ASNC_2"/>
    <property type="match status" value="1"/>
</dbReference>
<sequence>MENYLIDNLDRGILEALMGNARTAYAELAKQFGVSPGTIHVRVEKMKQAGIITGARIDVSPKQLGYDVGCFIGIILKSAKDYPSALAKLESLDEVTEAYYTTGHYSIFIKVMCRSIDALQHVLINKIQTIDEIQSTETLIVLQNPIMRTIKP</sequence>
<feature type="chain" id="PRO_0000111722" description="Regulatory protein AsnC">
    <location>
        <begin position="1"/>
        <end position="152"/>
    </location>
</feature>
<feature type="domain" description="HTH asnC-type" evidence="2">
    <location>
        <begin position="6"/>
        <end position="67"/>
    </location>
</feature>
<feature type="DNA-binding region" description="H-T-H motif" evidence="2">
    <location>
        <begin position="25"/>
        <end position="44"/>
    </location>
</feature>